<organism>
    <name type="scientific">Streptococcus agalactiae serotype V (strain ATCC BAA-611 / 2603 V/R)</name>
    <dbReference type="NCBI Taxonomy" id="208435"/>
    <lineage>
        <taxon>Bacteria</taxon>
        <taxon>Bacillati</taxon>
        <taxon>Bacillota</taxon>
        <taxon>Bacilli</taxon>
        <taxon>Lactobacillales</taxon>
        <taxon>Streptococcaceae</taxon>
        <taxon>Streptococcus</taxon>
    </lineage>
</organism>
<proteinExistence type="inferred from homology"/>
<reference key="1">
    <citation type="journal article" date="2002" name="Proc. Natl. Acad. Sci. U.S.A.">
        <title>Complete genome sequence and comparative genomic analysis of an emerging human pathogen, serotype V Streptococcus agalactiae.</title>
        <authorList>
            <person name="Tettelin H."/>
            <person name="Masignani V."/>
            <person name="Cieslewicz M.J."/>
            <person name="Eisen J.A."/>
            <person name="Peterson S.N."/>
            <person name="Wessels M.R."/>
            <person name="Paulsen I.T."/>
            <person name="Nelson K.E."/>
            <person name="Margarit I."/>
            <person name="Read T.D."/>
            <person name="Madoff L.C."/>
            <person name="Wolf A.M."/>
            <person name="Beanan M.J."/>
            <person name="Brinkac L.M."/>
            <person name="Daugherty S.C."/>
            <person name="DeBoy R.T."/>
            <person name="Durkin A.S."/>
            <person name="Kolonay J.F."/>
            <person name="Madupu R."/>
            <person name="Lewis M.R."/>
            <person name="Radune D."/>
            <person name="Fedorova N.B."/>
            <person name="Scanlan D."/>
            <person name="Khouri H.M."/>
            <person name="Mulligan S."/>
            <person name="Carty H.A."/>
            <person name="Cline R.T."/>
            <person name="Van Aken S.E."/>
            <person name="Gill J."/>
            <person name="Scarselli M."/>
            <person name="Mora M."/>
            <person name="Iacobini E.T."/>
            <person name="Brettoni C."/>
            <person name="Galli G."/>
            <person name="Mariani M."/>
            <person name="Vegni F."/>
            <person name="Maione D."/>
            <person name="Rinaudo D."/>
            <person name="Rappuoli R."/>
            <person name="Telford J.L."/>
            <person name="Kasper D.L."/>
            <person name="Grandi G."/>
            <person name="Fraser C.M."/>
        </authorList>
    </citation>
    <scope>NUCLEOTIDE SEQUENCE [LARGE SCALE GENOMIC DNA]</scope>
    <source>
        <strain>ATCC BAA-611 / 2603 V/R</strain>
    </source>
</reference>
<dbReference type="EC" id="2.5.1.145" evidence="1"/>
<dbReference type="EMBL" id="AE009948">
    <property type="protein sequence ID" value="AAM99624.1"/>
    <property type="molecule type" value="Genomic_DNA"/>
</dbReference>
<dbReference type="RefSeq" id="NP_687752.1">
    <property type="nucleotide sequence ID" value="NC_004116.1"/>
</dbReference>
<dbReference type="RefSeq" id="WP_000609732.1">
    <property type="nucleotide sequence ID" value="NC_004116.1"/>
</dbReference>
<dbReference type="SMR" id="Q8E0J4"/>
<dbReference type="STRING" id="208435.SAG0737"/>
<dbReference type="KEGG" id="sag:SAG0737"/>
<dbReference type="PATRIC" id="fig|208435.3.peg.743"/>
<dbReference type="HOGENOM" id="CLU_013386_0_1_9"/>
<dbReference type="OrthoDB" id="871140at2"/>
<dbReference type="UniPathway" id="UPA00664"/>
<dbReference type="Proteomes" id="UP000000821">
    <property type="component" value="Chromosome"/>
</dbReference>
<dbReference type="GO" id="GO:0005886">
    <property type="term" value="C:plasma membrane"/>
    <property type="evidence" value="ECO:0007669"/>
    <property type="project" value="UniProtKB-SubCell"/>
</dbReference>
<dbReference type="GO" id="GO:0008961">
    <property type="term" value="F:phosphatidylglycerol-prolipoprotein diacylglyceryl transferase activity"/>
    <property type="evidence" value="ECO:0007669"/>
    <property type="project" value="UniProtKB-UniRule"/>
</dbReference>
<dbReference type="GO" id="GO:0042158">
    <property type="term" value="P:lipoprotein biosynthetic process"/>
    <property type="evidence" value="ECO:0007669"/>
    <property type="project" value="UniProtKB-UniRule"/>
</dbReference>
<dbReference type="HAMAP" id="MF_01147">
    <property type="entry name" value="Lgt"/>
    <property type="match status" value="1"/>
</dbReference>
<dbReference type="InterPro" id="IPR001640">
    <property type="entry name" value="Lgt"/>
</dbReference>
<dbReference type="NCBIfam" id="TIGR00544">
    <property type="entry name" value="lgt"/>
    <property type="match status" value="1"/>
</dbReference>
<dbReference type="PANTHER" id="PTHR30589:SF0">
    <property type="entry name" value="PHOSPHATIDYLGLYCEROL--PROLIPOPROTEIN DIACYLGLYCERYL TRANSFERASE"/>
    <property type="match status" value="1"/>
</dbReference>
<dbReference type="PANTHER" id="PTHR30589">
    <property type="entry name" value="PROLIPOPROTEIN DIACYLGLYCERYL TRANSFERASE"/>
    <property type="match status" value="1"/>
</dbReference>
<dbReference type="Pfam" id="PF01790">
    <property type="entry name" value="LGT"/>
    <property type="match status" value="1"/>
</dbReference>
<dbReference type="PROSITE" id="PS01311">
    <property type="entry name" value="LGT"/>
    <property type="match status" value="1"/>
</dbReference>
<comment type="function">
    <text evidence="1">Catalyzes the transfer of the diacylglyceryl group from phosphatidylglycerol to the sulfhydryl group of the N-terminal cysteine of a prolipoprotein, the first step in the formation of mature lipoproteins.</text>
</comment>
<comment type="catalytic activity">
    <reaction evidence="1">
        <text>L-cysteinyl-[prolipoprotein] + a 1,2-diacyl-sn-glycero-3-phospho-(1'-sn-glycerol) = an S-1,2-diacyl-sn-glyceryl-L-cysteinyl-[prolipoprotein] + sn-glycerol 1-phosphate + H(+)</text>
        <dbReference type="Rhea" id="RHEA:56712"/>
        <dbReference type="Rhea" id="RHEA-COMP:14679"/>
        <dbReference type="Rhea" id="RHEA-COMP:14680"/>
        <dbReference type="ChEBI" id="CHEBI:15378"/>
        <dbReference type="ChEBI" id="CHEBI:29950"/>
        <dbReference type="ChEBI" id="CHEBI:57685"/>
        <dbReference type="ChEBI" id="CHEBI:64716"/>
        <dbReference type="ChEBI" id="CHEBI:140658"/>
        <dbReference type="EC" id="2.5.1.145"/>
    </reaction>
</comment>
<comment type="pathway">
    <text evidence="1">Protein modification; lipoprotein biosynthesis (diacylglyceryl transfer).</text>
</comment>
<comment type="subcellular location">
    <subcellularLocation>
        <location evidence="1">Cell membrane</location>
        <topology evidence="1">Multi-pass membrane protein</topology>
    </subcellularLocation>
</comment>
<comment type="similarity">
    <text evidence="1">Belongs to the Lgt family.</text>
</comment>
<evidence type="ECO:0000255" key="1">
    <source>
        <dbReference type="HAMAP-Rule" id="MF_01147"/>
    </source>
</evidence>
<accession>Q8E0J4</accession>
<protein>
    <recommendedName>
        <fullName evidence="1">Phosphatidylglycerol--prolipoprotein diacylglyceryl transferase</fullName>
        <ecNumber evidence="1">2.5.1.145</ecNumber>
    </recommendedName>
</protein>
<feature type="chain" id="PRO_0000172683" description="Phosphatidylglycerol--prolipoprotein diacylglyceryl transferase">
    <location>
        <begin position="1"/>
        <end position="257"/>
    </location>
</feature>
<feature type="transmembrane region" description="Helical" evidence="1">
    <location>
        <begin position="12"/>
        <end position="32"/>
    </location>
</feature>
<feature type="transmembrane region" description="Helical" evidence="1">
    <location>
        <begin position="49"/>
        <end position="69"/>
    </location>
</feature>
<feature type="transmembrane region" description="Helical" evidence="1">
    <location>
        <begin position="83"/>
        <end position="103"/>
    </location>
</feature>
<feature type="transmembrane region" description="Helical" evidence="1">
    <location>
        <begin position="109"/>
        <end position="129"/>
    </location>
</feature>
<feature type="transmembrane region" description="Helical" evidence="1">
    <location>
        <begin position="167"/>
        <end position="187"/>
    </location>
</feature>
<feature type="transmembrane region" description="Helical" evidence="1">
    <location>
        <begin position="197"/>
        <end position="217"/>
    </location>
</feature>
<feature type="transmembrane region" description="Helical" evidence="1">
    <location>
        <begin position="226"/>
        <end position="246"/>
    </location>
</feature>
<feature type="binding site" evidence="1">
    <location>
        <position position="131"/>
    </location>
    <ligand>
        <name>a 1,2-diacyl-sn-glycero-3-phospho-(1'-sn-glycerol)</name>
        <dbReference type="ChEBI" id="CHEBI:64716"/>
    </ligand>
</feature>
<gene>
    <name evidence="1" type="primary">lgt</name>
    <name type="ordered locus">SAG0737</name>
</gene>
<sequence>MINPVAIRLGPFSIRWYAICIVSGMLLAVYLAMKEAPRKNIKSDDILDFILMAFPLSIVGARIYYVIFEWAYYSKHPVEIIAIWNGGIAIYGGLITGAILLVIFSYRRLINPIDFLDIAAPGVMIAQAIGRWGNFINQEAYGRAVKNLNYVPNFIKNQMYIDGAYRVPTFLYESLWNFLGFVIIMSIRHRPRTLKQGEVACFYLVWYGCGRFIIEGMRTDSLYLAGLRVSQWLSVILVIIGIVMIIYRRREQHISYY</sequence>
<keyword id="KW-1003">Cell membrane</keyword>
<keyword id="KW-0472">Membrane</keyword>
<keyword id="KW-1185">Reference proteome</keyword>
<keyword id="KW-0808">Transferase</keyword>
<keyword id="KW-0812">Transmembrane</keyword>
<keyword id="KW-1133">Transmembrane helix</keyword>
<name>LGT_STRA5</name>